<evidence type="ECO:0000250" key="1">
    <source>
        <dbReference type="UniProtKB" id="Q92904"/>
    </source>
</evidence>
<evidence type="ECO:0000255" key="2">
    <source>
        <dbReference type="PROSITE-ProRule" id="PRU00176"/>
    </source>
</evidence>
<evidence type="ECO:0000255" key="3">
    <source>
        <dbReference type="PROSITE-ProRule" id="PRU01238"/>
    </source>
</evidence>
<evidence type="ECO:0000269" key="4">
    <source>
    </source>
</evidence>
<evidence type="ECO:0000269" key="5">
    <source>
    </source>
</evidence>
<evidence type="ECO:0000269" key="6">
    <source>
    </source>
</evidence>
<evidence type="ECO:0000305" key="7">
    <source>
    </source>
</evidence>
<comment type="function">
    <text evidence="1 5 7">RNA-binding protein involved in gametogenesis in both males and females (PubMed:12296827). Acts by binding to the 3'-UTR of mRNA, specifically recognizing GUU triplets, and promoting the translation of key transcripts (PubMed:12296827). Establishes oocyte polarity through interaction with Bucky ball (BUC) (Probable). Interacts with Bucky ball (BUC) mRNA to mediate Balbiani body formation and oocyte polarity during early oogenesis (By similarity).</text>
</comment>
<comment type="subcellular location">
    <subcellularLocation>
        <location evidence="4">Cytoplasm</location>
    </subcellularLocation>
</comment>
<comment type="tissue specificity">
    <text evidence="4">Testis and ovary specific. In ovary, it is localized in the cortex of oocytes (PubMed:10330505). At the onset of embryogenesis, maternal product is located at the vegetal pole, before migrating toward blastomeres through cytoplasmic streams as early embryogenesis proceededs (PubMed:10330505).</text>
</comment>
<comment type="developmental stage">
    <text evidence="6">Expressed both maternally and zygotically. Transcripts localizes to the Balbiani body during oogenesis (PubMed:18582455).</text>
</comment>
<comment type="domain">
    <text evidence="5">The DAZ domain is essential for the translation activation activity.</text>
</comment>
<comment type="similarity">
    <text evidence="3">Belongs to the RRM DAZ family.</text>
</comment>
<dbReference type="EMBL" id="AB018191">
    <property type="protein sequence ID" value="BAA75800.1"/>
    <property type="molecule type" value="mRNA"/>
</dbReference>
<dbReference type="EMBL" id="BC076423">
    <property type="protein sequence ID" value="AAH76423.1"/>
    <property type="molecule type" value="mRNA"/>
</dbReference>
<dbReference type="RefSeq" id="NP_571599.1">
    <property type="nucleotide sequence ID" value="NM_131524.1"/>
</dbReference>
<dbReference type="SMR" id="Q9YGW7"/>
<dbReference type="FunCoup" id="Q9YGW7">
    <property type="interactions" value="707"/>
</dbReference>
<dbReference type="STRING" id="7955.ENSDARP00000113712"/>
<dbReference type="PaxDb" id="7955-ENSDARP00000113712"/>
<dbReference type="GeneID" id="58039"/>
<dbReference type="KEGG" id="dre:58039"/>
<dbReference type="AGR" id="ZFIN:ZDB-GENE-000405-6"/>
<dbReference type="CTD" id="1618"/>
<dbReference type="ZFIN" id="ZDB-GENE-000405-6">
    <property type="gene designation" value="dazl"/>
</dbReference>
<dbReference type="eggNOG" id="KOG0118">
    <property type="taxonomic scope" value="Eukaryota"/>
</dbReference>
<dbReference type="InParanoid" id="Q9YGW7"/>
<dbReference type="OrthoDB" id="762982at2759"/>
<dbReference type="PhylomeDB" id="Q9YGW7"/>
<dbReference type="PRO" id="PR:Q9YGW7"/>
<dbReference type="Proteomes" id="UP000000437">
    <property type="component" value="Chromosome 19"/>
</dbReference>
<dbReference type="GO" id="GO:0005737">
    <property type="term" value="C:cytoplasm"/>
    <property type="evidence" value="ECO:0000314"/>
    <property type="project" value="UniProtKB"/>
</dbReference>
<dbReference type="GO" id="GO:0003730">
    <property type="term" value="F:mRNA 3'-UTR binding"/>
    <property type="evidence" value="ECO:0000314"/>
    <property type="project" value="ZFIN"/>
</dbReference>
<dbReference type="GO" id="GO:0003729">
    <property type="term" value="F:mRNA binding"/>
    <property type="evidence" value="ECO:0000314"/>
    <property type="project" value="ZFIN"/>
</dbReference>
<dbReference type="GO" id="GO:0003723">
    <property type="term" value="F:RNA binding"/>
    <property type="evidence" value="ECO:0000314"/>
    <property type="project" value="UniProtKB"/>
</dbReference>
<dbReference type="GO" id="GO:0043565">
    <property type="term" value="F:sequence-specific DNA binding"/>
    <property type="evidence" value="ECO:0000315"/>
    <property type="project" value="ZFIN"/>
</dbReference>
<dbReference type="GO" id="GO:0008494">
    <property type="term" value="F:translation activator activity"/>
    <property type="evidence" value="ECO:0000314"/>
    <property type="project" value="UniProtKB"/>
</dbReference>
<dbReference type="GO" id="GO:0070935">
    <property type="term" value="P:3'-UTR-mediated mRNA stabilization"/>
    <property type="evidence" value="ECO:0000314"/>
    <property type="project" value="ZFIN"/>
</dbReference>
<dbReference type="GO" id="GO:0048134">
    <property type="term" value="P:germ-line cyst formation"/>
    <property type="evidence" value="ECO:0000315"/>
    <property type="project" value="ZFIN"/>
</dbReference>
<dbReference type="GO" id="GO:0060965">
    <property type="term" value="P:negative regulation of miRNA-mediated gene silencing"/>
    <property type="evidence" value="ECO:0000314"/>
    <property type="project" value="ZFIN"/>
</dbReference>
<dbReference type="GO" id="GO:0048477">
    <property type="term" value="P:oogenesis"/>
    <property type="evidence" value="ECO:0007669"/>
    <property type="project" value="UniProtKB-KW"/>
</dbReference>
<dbReference type="GO" id="GO:0010628">
    <property type="term" value="P:positive regulation of gene expression"/>
    <property type="evidence" value="ECO:0000314"/>
    <property type="project" value="ZFIN"/>
</dbReference>
<dbReference type="GO" id="GO:0045948">
    <property type="term" value="P:positive regulation of translational initiation"/>
    <property type="evidence" value="ECO:0000318"/>
    <property type="project" value="GO_Central"/>
</dbReference>
<dbReference type="GO" id="GO:0007283">
    <property type="term" value="P:spermatogenesis"/>
    <property type="evidence" value="ECO:0007669"/>
    <property type="project" value="UniProtKB-KW"/>
</dbReference>
<dbReference type="CDD" id="cd12672">
    <property type="entry name" value="RRM_DAZL"/>
    <property type="match status" value="1"/>
</dbReference>
<dbReference type="FunFam" id="3.30.70.330:FF:000180">
    <property type="entry name" value="Deleted in azoospermia-like"/>
    <property type="match status" value="1"/>
</dbReference>
<dbReference type="Gene3D" id="3.30.70.330">
    <property type="match status" value="1"/>
</dbReference>
<dbReference type="InterPro" id="IPR043628">
    <property type="entry name" value="DAZ_dom"/>
</dbReference>
<dbReference type="InterPro" id="IPR037551">
    <property type="entry name" value="DAZ_RRM_vert"/>
</dbReference>
<dbReference type="InterPro" id="IPR012677">
    <property type="entry name" value="Nucleotide-bd_a/b_plait_sf"/>
</dbReference>
<dbReference type="InterPro" id="IPR035979">
    <property type="entry name" value="RBD_domain_sf"/>
</dbReference>
<dbReference type="InterPro" id="IPR000504">
    <property type="entry name" value="RRM_dom"/>
</dbReference>
<dbReference type="PANTHER" id="PTHR11176">
    <property type="entry name" value="BOULE-RELATED"/>
    <property type="match status" value="1"/>
</dbReference>
<dbReference type="PANTHER" id="PTHR11176:SF4">
    <property type="entry name" value="DELETED IN AZOOSPERMIA-LIKE"/>
    <property type="match status" value="1"/>
</dbReference>
<dbReference type="Pfam" id="PF00076">
    <property type="entry name" value="RRM_1"/>
    <property type="match status" value="1"/>
</dbReference>
<dbReference type="SMART" id="SM00360">
    <property type="entry name" value="RRM"/>
    <property type="match status" value="1"/>
</dbReference>
<dbReference type="SUPFAM" id="SSF54928">
    <property type="entry name" value="RNA-binding domain, RBD"/>
    <property type="match status" value="1"/>
</dbReference>
<dbReference type="PROSITE" id="PS51890">
    <property type="entry name" value="DAZ"/>
    <property type="match status" value="1"/>
</dbReference>
<dbReference type="PROSITE" id="PS50102">
    <property type="entry name" value="RRM"/>
    <property type="match status" value="1"/>
</dbReference>
<gene>
    <name type="primary">dazl</name>
    <name type="synonym">zdazl</name>
</gene>
<reference key="1">
    <citation type="journal article" date="1999" name="Mech. Dev.">
        <title>Maternal mRNA localization of zebrafish DAZ-like gene.</title>
        <authorList>
            <person name="Maegawa S."/>
            <person name="Yasuda K."/>
            <person name="Inoue K."/>
        </authorList>
    </citation>
    <scope>NUCLEOTIDE SEQUENCE [MRNA]</scope>
    <scope>SUBCELLULAR LOCATION</scope>
    <scope>TISSUE SPECIFICITY</scope>
</reference>
<reference key="2">
    <citation type="submission" date="2004-07" db="EMBL/GenBank/DDBJ databases">
        <authorList>
            <consortium name="NIH - Zebrafish Gene Collection (ZGC) project"/>
        </authorList>
    </citation>
    <scope>NUCLEOTIDE SEQUENCE [LARGE SCALE MRNA]</scope>
    <source>
        <tissue>Embryo</tissue>
    </source>
</reference>
<reference key="3">
    <citation type="journal article" date="2002" name="Genes Cells">
        <title>Zebrafish DAZ-like protein controls translation via the sequence 'GUUC'.</title>
        <authorList>
            <person name="Maegawa S."/>
            <person name="Yamashita M."/>
            <person name="Yasuda K."/>
            <person name="Inoue K."/>
        </authorList>
    </citation>
    <scope>FUNCTION</scope>
    <scope>DOMAIN</scope>
    <scope>MUTAGENESIS OF PHE-91</scope>
</reference>
<reference key="4">
    <citation type="journal article" date="2008" name="Dev. Biol.">
        <title>Bucky ball functions in Balbiani body assembly and animal-vegetal polarity in the oocyte and follicle cell layer in zebrafish.</title>
        <authorList>
            <person name="Marlow F.L."/>
            <person name="Mullins M.C."/>
        </authorList>
    </citation>
    <scope>FUNCTION</scope>
    <scope>SUBCELLULAR LOCATION</scope>
</reference>
<reference key="5">
    <citation type="journal article" date="2014" name="Development">
        <title>Oocyte polarity requires a Bucky ball-dependent feedback amplification loop.</title>
        <authorList>
            <person name="Heim A.E."/>
            <person name="Hartung O."/>
            <person name="Rothhaemel S."/>
            <person name="Ferreira E."/>
            <person name="Jenny A."/>
            <person name="Marlow F.L."/>
        </authorList>
    </citation>
    <scope>FUNCTION</scope>
    <scope>RNA-BINDING</scope>
</reference>
<sequence>MVQGVQLPVCLICGLYSQDIQKHRQGFPSSLKLSNGYILPEGKMTPNTLFVGGIDMKVDENEIREFFAKYGSVKEVKIITYRGGICKGYGFVYFSEDVDIQTIVDQPISFKGKKLKLGPAIMKERSSRSVSSPMIGPSQWVNPTPYMYCSCCPPGLAPPSPVFSGGNQYMQPYSYSSPPGIMVPQVPMNYAQTTYAYQYPLPQWCGEQRTRLVNQNFVDCGVQTLLTLM</sequence>
<name>DAZL_DANRE</name>
<proteinExistence type="evidence at protein level"/>
<protein>
    <recommendedName>
        <fullName>Deleted in azoospermia-like</fullName>
        <shortName>DAZ-like protein</shortName>
        <shortName>zDazl</shortName>
    </recommendedName>
</protein>
<feature type="chain" id="PRO_0000081562" description="Deleted in azoospermia-like">
    <location>
        <begin position="1"/>
        <end position="229"/>
    </location>
</feature>
<feature type="domain" description="RRM" evidence="2">
    <location>
        <begin position="47"/>
        <end position="128"/>
    </location>
</feature>
<feature type="domain" description="DAZ" evidence="3">
    <location>
        <begin position="172"/>
        <end position="198"/>
    </location>
</feature>
<feature type="mutagenesis site" description="Abolishes the RNA-binding activity." evidence="5">
    <original>F</original>
    <variation>A</variation>
    <location>
        <position position="91"/>
    </location>
</feature>
<keyword id="KW-0010">Activator</keyword>
<keyword id="KW-0963">Cytoplasm</keyword>
<keyword id="KW-0217">Developmental protein</keyword>
<keyword id="KW-0221">Differentiation</keyword>
<keyword id="KW-0896">Oogenesis</keyword>
<keyword id="KW-1185">Reference proteome</keyword>
<keyword id="KW-0694">RNA-binding</keyword>
<keyword id="KW-0744">Spermatogenesis</keyword>
<keyword id="KW-0810">Translation regulation</keyword>
<organism>
    <name type="scientific">Danio rerio</name>
    <name type="common">Zebrafish</name>
    <name type="synonym">Brachydanio rerio</name>
    <dbReference type="NCBI Taxonomy" id="7955"/>
    <lineage>
        <taxon>Eukaryota</taxon>
        <taxon>Metazoa</taxon>
        <taxon>Chordata</taxon>
        <taxon>Craniata</taxon>
        <taxon>Vertebrata</taxon>
        <taxon>Euteleostomi</taxon>
        <taxon>Actinopterygii</taxon>
        <taxon>Neopterygii</taxon>
        <taxon>Teleostei</taxon>
        <taxon>Ostariophysi</taxon>
        <taxon>Cypriniformes</taxon>
        <taxon>Danionidae</taxon>
        <taxon>Danioninae</taxon>
        <taxon>Danio</taxon>
    </lineage>
</organism>
<accession>Q9YGW7</accession>